<feature type="signal peptide">
    <location>
        <begin position="1"/>
        <end position="19"/>
    </location>
</feature>
<feature type="chain" id="PRO_0000015016" description="Neural cell adhesion molecule 1-A">
    <location>
        <begin position="20"/>
        <end position="1088"/>
    </location>
</feature>
<feature type="topological domain" description="Extracellular" evidence="4">
    <location>
        <begin position="20"/>
        <end position="705"/>
    </location>
</feature>
<feature type="transmembrane region" description="Helical" evidence="4">
    <location>
        <begin position="706"/>
        <end position="723"/>
    </location>
</feature>
<feature type="topological domain" description="Cytoplasmic" evidence="4">
    <location>
        <begin position="724"/>
        <end position="1088"/>
    </location>
</feature>
<feature type="domain" description="Ig-like C2-type 1">
    <location>
        <begin position="20"/>
        <end position="108"/>
    </location>
</feature>
<feature type="domain" description="Ig-like C2-type 2">
    <location>
        <begin position="113"/>
        <end position="202"/>
    </location>
</feature>
<feature type="domain" description="Ig-like C2-type 3">
    <location>
        <begin position="209"/>
        <end position="294"/>
    </location>
</feature>
<feature type="domain" description="Ig-like C2-type 4">
    <location>
        <begin position="303"/>
        <end position="397"/>
    </location>
</feature>
<feature type="domain" description="Ig-like C2-type 5">
    <location>
        <begin position="400"/>
        <end position="484"/>
    </location>
</feature>
<feature type="domain" description="Fibronectin type-III 1" evidence="5">
    <location>
        <begin position="493"/>
        <end position="592"/>
    </location>
</feature>
<feature type="domain" description="Fibronectin type-III 2" evidence="5">
    <location>
        <begin position="594"/>
        <end position="690"/>
    </location>
</feature>
<feature type="region of interest" description="Disordered" evidence="6">
    <location>
        <begin position="758"/>
        <end position="802"/>
    </location>
</feature>
<feature type="region of interest" description="Disordered" evidence="6">
    <location>
        <begin position="829"/>
        <end position="1000"/>
    </location>
</feature>
<feature type="region of interest" description="Disordered" evidence="6">
    <location>
        <begin position="1024"/>
        <end position="1088"/>
    </location>
</feature>
<feature type="compositionally biased region" description="Basic and acidic residues" evidence="6">
    <location>
        <begin position="758"/>
        <end position="784"/>
    </location>
</feature>
<feature type="compositionally biased region" description="Low complexity" evidence="6">
    <location>
        <begin position="835"/>
        <end position="847"/>
    </location>
</feature>
<feature type="compositionally biased region" description="Low complexity" evidence="6">
    <location>
        <begin position="854"/>
        <end position="875"/>
    </location>
</feature>
<feature type="compositionally biased region" description="Low complexity" evidence="6">
    <location>
        <begin position="913"/>
        <end position="936"/>
    </location>
</feature>
<feature type="compositionally biased region" description="Polar residues" evidence="6">
    <location>
        <begin position="965"/>
        <end position="974"/>
    </location>
</feature>
<feature type="compositionally biased region" description="Basic and acidic residues" evidence="6">
    <location>
        <begin position="1046"/>
        <end position="1064"/>
    </location>
</feature>
<feature type="compositionally biased region" description="Polar residues" evidence="6">
    <location>
        <begin position="1076"/>
        <end position="1088"/>
    </location>
</feature>
<feature type="binding site" evidence="4">
    <location>
        <begin position="149"/>
        <end position="153"/>
    </location>
    <ligand>
        <name>heparin</name>
        <dbReference type="ChEBI" id="CHEBI:28304"/>
    </ligand>
</feature>
<feature type="binding site" evidence="4">
    <location>
        <begin position="158"/>
        <end position="162"/>
    </location>
    <ligand>
        <name>heparin</name>
        <dbReference type="ChEBI" id="CHEBI:28304"/>
    </ligand>
</feature>
<feature type="glycosylation site" description="N-linked (GlcNAc...) asparagine" evidence="4">
    <location>
        <position position="82"/>
    </location>
</feature>
<feature type="glycosylation site" description="N-linked (GlcNAc...) asparagine" evidence="4">
    <location>
        <position position="219"/>
    </location>
</feature>
<feature type="glycosylation site" description="N-linked (GlcNAc...) asparagine" evidence="4">
    <location>
        <position position="310"/>
    </location>
</feature>
<feature type="glycosylation site" description="N-linked (GlcNAc...) asparagine" evidence="4">
    <location>
        <position position="341"/>
    </location>
</feature>
<feature type="glycosylation site" description="N-linked (GlcNAc...) asparagine" evidence="4">
    <location>
        <position position="417"/>
    </location>
</feature>
<feature type="glycosylation site" description="N-linked (GlcNAc...) asparagine" evidence="4">
    <location>
        <position position="443"/>
    </location>
</feature>
<feature type="glycosylation site" description="N-linked (GlcNAc...) asparagine" evidence="4">
    <location>
        <position position="472"/>
    </location>
</feature>
<feature type="disulfide bond" evidence="3">
    <location>
        <begin position="41"/>
        <end position="93"/>
    </location>
</feature>
<feature type="disulfide bond" evidence="3">
    <location>
        <begin position="136"/>
        <end position="186"/>
    </location>
</feature>
<feature type="disulfide bond" evidence="1">
    <location>
        <begin position="232"/>
        <end position="282"/>
    </location>
</feature>
<feature type="disulfide bond" evidence="8">
    <location>
        <begin position="323"/>
        <end position="379"/>
    </location>
</feature>
<feature type="disulfide bond" evidence="8">
    <location>
        <begin position="420"/>
        <end position="473"/>
    </location>
</feature>
<feature type="splice variant" id="VSP_002589" description="In isoform 2." evidence="7">
    <location>
        <begin position="804"/>
        <end position="1049"/>
    </location>
</feature>
<evidence type="ECO:0000250" key="1">
    <source>
        <dbReference type="UniProtKB" id="P13590"/>
    </source>
</evidence>
<evidence type="ECO:0000250" key="2">
    <source>
        <dbReference type="UniProtKB" id="P13591"/>
    </source>
</evidence>
<evidence type="ECO:0000250" key="3">
    <source>
        <dbReference type="UniProtKB" id="P13595"/>
    </source>
</evidence>
<evidence type="ECO:0000255" key="4"/>
<evidence type="ECO:0000255" key="5">
    <source>
        <dbReference type="PROSITE-ProRule" id="PRU00316"/>
    </source>
</evidence>
<evidence type="ECO:0000256" key="6">
    <source>
        <dbReference type="SAM" id="MobiDB-lite"/>
    </source>
</evidence>
<evidence type="ECO:0000303" key="7">
    <source>
    </source>
</evidence>
<evidence type="ECO:0000305" key="8"/>
<accession>P16170</accession>
<gene>
    <name evidence="2" type="primary">ncam1-a</name>
</gene>
<protein>
    <recommendedName>
        <fullName evidence="2">Neural cell adhesion molecule 1-A</fullName>
        <shortName>N-CAM-1-A</shortName>
        <shortName>NCAM-1-A</shortName>
    </recommendedName>
</protein>
<organism>
    <name type="scientific">Xenopus laevis</name>
    <name type="common">African clawed frog</name>
    <dbReference type="NCBI Taxonomy" id="8355"/>
    <lineage>
        <taxon>Eukaryota</taxon>
        <taxon>Metazoa</taxon>
        <taxon>Chordata</taxon>
        <taxon>Craniata</taxon>
        <taxon>Vertebrata</taxon>
        <taxon>Euteleostomi</taxon>
        <taxon>Amphibia</taxon>
        <taxon>Batrachia</taxon>
        <taxon>Anura</taxon>
        <taxon>Pipoidea</taxon>
        <taxon>Pipidae</taxon>
        <taxon>Xenopodinae</taxon>
        <taxon>Xenopus</taxon>
        <taxon>Xenopus</taxon>
    </lineage>
</organism>
<dbReference type="EMBL" id="M25696">
    <property type="protein sequence ID" value="AAA49909.1"/>
    <property type="molecule type" value="mRNA"/>
</dbReference>
<dbReference type="PIR" id="S09600">
    <property type="entry name" value="IJXLNL"/>
</dbReference>
<dbReference type="RefSeq" id="NP_001081296.1">
    <molecule id="P16170-1"/>
    <property type="nucleotide sequence ID" value="NM_001087827.1"/>
</dbReference>
<dbReference type="SMR" id="P16170"/>
<dbReference type="GlyCosmos" id="P16170">
    <property type="glycosylation" value="7 sites, No reported glycans"/>
</dbReference>
<dbReference type="DNASU" id="397761"/>
<dbReference type="GeneID" id="397761"/>
<dbReference type="KEGG" id="xla:397761"/>
<dbReference type="AGR" id="Xenbase:XB-GENE-6252598"/>
<dbReference type="CTD" id="397761"/>
<dbReference type="Xenbase" id="XB-GENE-6252598">
    <property type="gene designation" value="ncam1.S"/>
</dbReference>
<dbReference type="OrthoDB" id="10056271at2759"/>
<dbReference type="Proteomes" id="UP000186698">
    <property type="component" value="Chromosome 7S"/>
</dbReference>
<dbReference type="Bgee" id="397761">
    <property type="expression patterns" value="Expressed in heart and 16 other cell types or tissues"/>
</dbReference>
<dbReference type="GO" id="GO:0043005">
    <property type="term" value="C:neuron projection"/>
    <property type="evidence" value="ECO:0000318"/>
    <property type="project" value="GO_Central"/>
</dbReference>
<dbReference type="GO" id="GO:0005886">
    <property type="term" value="C:plasma membrane"/>
    <property type="evidence" value="ECO:0007669"/>
    <property type="project" value="UniProtKB-SubCell"/>
</dbReference>
<dbReference type="GO" id="GO:0007155">
    <property type="term" value="P:cell adhesion"/>
    <property type="evidence" value="ECO:0007669"/>
    <property type="project" value="UniProtKB-KW"/>
</dbReference>
<dbReference type="CDD" id="cd00063">
    <property type="entry name" value="FN3"/>
    <property type="match status" value="2"/>
</dbReference>
<dbReference type="CDD" id="cd00096">
    <property type="entry name" value="Ig"/>
    <property type="match status" value="2"/>
</dbReference>
<dbReference type="CDD" id="cd05865">
    <property type="entry name" value="IgI_1_NCAM-1"/>
    <property type="match status" value="1"/>
</dbReference>
<dbReference type="FunFam" id="2.60.40.10:FF:000086">
    <property type="entry name" value="Neural cell adhesion molecule 1"/>
    <property type="match status" value="1"/>
</dbReference>
<dbReference type="FunFam" id="2.60.40.10:FF:000173">
    <property type="entry name" value="Neural cell adhesion molecule 1"/>
    <property type="match status" value="1"/>
</dbReference>
<dbReference type="FunFam" id="2.60.40.10:FF:000137">
    <property type="entry name" value="neural cell adhesion molecule 1 isoform X2"/>
    <property type="match status" value="1"/>
</dbReference>
<dbReference type="FunFam" id="2.60.40.10:FF:001932">
    <property type="entry name" value="Neural cell adhesion molecule 1a"/>
    <property type="match status" value="1"/>
</dbReference>
<dbReference type="FunFam" id="2.60.40.10:FF:000636">
    <property type="entry name" value="Neural cell adhesion molecule 2"/>
    <property type="match status" value="1"/>
</dbReference>
<dbReference type="Gene3D" id="2.60.40.10">
    <property type="entry name" value="Immunoglobulins"/>
    <property type="match status" value="7"/>
</dbReference>
<dbReference type="InterPro" id="IPR003961">
    <property type="entry name" value="FN3_dom"/>
</dbReference>
<dbReference type="InterPro" id="IPR036116">
    <property type="entry name" value="FN3_sf"/>
</dbReference>
<dbReference type="InterPro" id="IPR007110">
    <property type="entry name" value="Ig-like_dom"/>
</dbReference>
<dbReference type="InterPro" id="IPR036179">
    <property type="entry name" value="Ig-like_dom_sf"/>
</dbReference>
<dbReference type="InterPro" id="IPR013783">
    <property type="entry name" value="Ig-like_fold"/>
</dbReference>
<dbReference type="InterPro" id="IPR013098">
    <property type="entry name" value="Ig_I-set"/>
</dbReference>
<dbReference type="InterPro" id="IPR003599">
    <property type="entry name" value="Ig_sub"/>
</dbReference>
<dbReference type="InterPro" id="IPR003598">
    <property type="entry name" value="Ig_sub2"/>
</dbReference>
<dbReference type="InterPro" id="IPR051170">
    <property type="entry name" value="Neural/epithelial_adhesion"/>
</dbReference>
<dbReference type="InterPro" id="IPR009138">
    <property type="entry name" value="Neural_cell_adh"/>
</dbReference>
<dbReference type="PANTHER" id="PTHR12231">
    <property type="entry name" value="CTX-RELATED TYPE I TRANSMEMBRANE PROTEIN"/>
    <property type="match status" value="1"/>
</dbReference>
<dbReference type="PANTHER" id="PTHR12231:SF239">
    <property type="entry name" value="NEURAL CELL ADHESION MOLECULE 1"/>
    <property type="match status" value="1"/>
</dbReference>
<dbReference type="Pfam" id="PF00041">
    <property type="entry name" value="fn3"/>
    <property type="match status" value="2"/>
</dbReference>
<dbReference type="Pfam" id="PF07679">
    <property type="entry name" value="I-set"/>
    <property type="match status" value="2"/>
</dbReference>
<dbReference type="Pfam" id="PF13927">
    <property type="entry name" value="Ig_3"/>
    <property type="match status" value="3"/>
</dbReference>
<dbReference type="PRINTS" id="PR01838">
    <property type="entry name" value="NCAMFAMILY"/>
</dbReference>
<dbReference type="SMART" id="SM00060">
    <property type="entry name" value="FN3"/>
    <property type="match status" value="2"/>
</dbReference>
<dbReference type="SMART" id="SM00409">
    <property type="entry name" value="IG"/>
    <property type="match status" value="5"/>
</dbReference>
<dbReference type="SMART" id="SM00408">
    <property type="entry name" value="IGc2"/>
    <property type="match status" value="5"/>
</dbReference>
<dbReference type="SUPFAM" id="SSF49265">
    <property type="entry name" value="Fibronectin type III"/>
    <property type="match status" value="1"/>
</dbReference>
<dbReference type="SUPFAM" id="SSF48726">
    <property type="entry name" value="Immunoglobulin"/>
    <property type="match status" value="5"/>
</dbReference>
<dbReference type="PROSITE" id="PS50853">
    <property type="entry name" value="FN3"/>
    <property type="match status" value="2"/>
</dbReference>
<dbReference type="PROSITE" id="PS50835">
    <property type="entry name" value="IG_LIKE"/>
    <property type="match status" value="5"/>
</dbReference>
<reference key="1">
    <citation type="journal article" date="1989" name="Nucleic Acids Res.">
        <title>Primary structure and developmental expression of a large cytoplasmic domain form of Xenopus laevis neural cell adhesion molecule (NCAM).</title>
        <authorList>
            <person name="Krieg P.A."/>
            <person name="Sakaguchi D.S."/>
            <person name="Kintner C.R."/>
        </authorList>
    </citation>
    <scope>NUCLEOTIDE SEQUENCE [MRNA] (ISOFORMS 1 AND 2)</scope>
</reference>
<proteinExistence type="evidence at transcript level"/>
<sequence>MLHIKDLIWTLYFIGTAVALEVNIVPDQGEISLGESKFFLCQVSGEATDISWYSPTGEKLVTQQQISVVRSDDYTSTLTIYNASSQDAGIYKCVASNEAEGESEGTVNLKIYQKLTFKNAPTPQEFKEGEDAVIICDVSSSIPSIITWRHKGKDVIFKKDVRFVVLANNYLQIRGIKKTDEGTYRCEGRILARGEINYKDIQVIVNVPPTIQARQLRVNATANMAESVVLSCDADGFPDPEISWLKKGEPIEDGEEKISFNEDQSEMTIHHVEKDDEAEYSCIANNQAGEAEATILLKVYAKPKITYVENKTAVELDEITLTCEASGDPIPSITWRTAVRNISSEATTLDGHIVVKEHIRMSALTLKDIQYTDAGEYFCIASNPIGVDMQAMYFEVQYAPKIRGPVVVYTWEGNPVNITCEVFAHPRAAVTWFRDGQLLPSSNFSNIKIYSGPTSSSLEVNPDSENDFGNYNCTAINTIGHEFSEFILVQADTPSSPAIRKVEPYSSTVMIVFDEPDSTGGVPILKYKAEWRVIGHEKWHTKYYDAKEVNAESIITVMGLKPETSYMVKLSAMNGKGLGDSTPSQEFTTQPVREPSAPKLVGHLSEDGNSIKVDILKQDDGGSPIRHYLVNYRALNALEWKPEMRVPSNSHHVMLKALEWNVDYEVIVVAENQQGKSKPALLSFRTTAKPTATTATASAGTGLGTGAIVGILIVIFVLLLVVVDVTCFFLNKCGLLMCIAVNFCGKAGPGAKGKDIEEGKAAFSKDESKEPIVEVRTEEERTPNHDGSNQIEPNETTPLTEPEHPAAVEDMLPSVTTVTTNSDTITETFATAQNSPTSETTTLTSSTAPPPTTAPDSNTIQSIQATPSKAEAPTTSSPPPTSSPKVAPLVDLSDTPTNNPSKVVANQAGPLNPSAATSAAEPPTVIIKPVTTVPPNAASPPPTPEPKQVKQEQSGTKSPEKEEAQPSTVKNPTEATKDESASLSNTKPLQDEDFQIDGGTFKTPEIDLAKDVFAALGTATPTAVASGKASELVSSTADTSVPLDSAKTEKTQVEEKSKPEEIDVKGTPAEVKTVPNEATQTNANESKA</sequence>
<name>NCA11_XENLA</name>
<keyword id="KW-0025">Alternative splicing</keyword>
<keyword id="KW-0130">Cell adhesion</keyword>
<keyword id="KW-1003">Cell membrane</keyword>
<keyword id="KW-1015">Disulfide bond</keyword>
<keyword id="KW-0325">Glycoprotein</keyword>
<keyword id="KW-0393">Immunoglobulin domain</keyword>
<keyword id="KW-0472">Membrane</keyword>
<keyword id="KW-1185">Reference proteome</keyword>
<keyword id="KW-0677">Repeat</keyword>
<keyword id="KW-0732">Signal</keyword>
<keyword id="KW-0812">Transmembrane</keyword>
<keyword id="KW-1133">Transmembrane helix</keyword>
<comment type="function">
    <text>This protein is a cell adhesion molecule involved in neuron-neuron adhesion, neurite fasciculation, outgrowth of neurites, etc.</text>
</comment>
<comment type="subcellular location">
    <subcellularLocation>
        <location>Cell membrane</location>
        <topology>Single-pass type I membrane protein</topology>
    </subcellularLocation>
</comment>
<comment type="alternative products">
    <event type="alternative splicing"/>
    <isoform>
        <id>P16170-1</id>
        <name>1</name>
        <name>N-CAM 180</name>
        <sequence type="displayed"/>
    </isoform>
    <isoform>
        <id>P16170-2</id>
        <name>2</name>
        <name>N-CAM 140</name>
        <sequence type="described" ref="VSP_002589"/>
    </isoform>
</comment>
<comment type="tissue specificity">
    <text>Expressed in neuron and in presumptive neural tissue.</text>
</comment>
<comment type="developmental stage">
    <text>The mRNA encoding this LD-NCAM is the major transcript present in both maternal RNA and in the embryo during early neural development.</text>
</comment>
<comment type="PTM">
    <text evidence="2">Polysialylated by ST8SIA2 and ST8SIA4. Polysialylation modulates cell interactions by confering both attractive and repulsive properties that are highly regulated by ST8SIA2 and ST8SIA4. Polysialylation is formed on a-2,3-linked sialic acid of core glycans.</text>
</comment>